<dbReference type="EC" id="2.1.1.228" evidence="1"/>
<dbReference type="EMBL" id="CP000227">
    <property type="protein sequence ID" value="ACM14054.1"/>
    <property type="molecule type" value="Genomic_DNA"/>
</dbReference>
<dbReference type="SMR" id="B9IVD0"/>
<dbReference type="KEGG" id="bcq:BCQ_3626"/>
<dbReference type="HOGENOM" id="CLU_047363_0_1_9"/>
<dbReference type="Proteomes" id="UP000000441">
    <property type="component" value="Chromosome"/>
</dbReference>
<dbReference type="GO" id="GO:0005829">
    <property type="term" value="C:cytosol"/>
    <property type="evidence" value="ECO:0007669"/>
    <property type="project" value="TreeGrafter"/>
</dbReference>
<dbReference type="GO" id="GO:0052906">
    <property type="term" value="F:tRNA (guanine(37)-N1)-methyltransferase activity"/>
    <property type="evidence" value="ECO:0007669"/>
    <property type="project" value="UniProtKB-UniRule"/>
</dbReference>
<dbReference type="GO" id="GO:0002939">
    <property type="term" value="P:tRNA N1-guanine methylation"/>
    <property type="evidence" value="ECO:0007669"/>
    <property type="project" value="TreeGrafter"/>
</dbReference>
<dbReference type="CDD" id="cd18080">
    <property type="entry name" value="TrmD-like"/>
    <property type="match status" value="1"/>
</dbReference>
<dbReference type="FunFam" id="1.10.1270.20:FF:000001">
    <property type="entry name" value="tRNA (guanine-N(1)-)-methyltransferase"/>
    <property type="match status" value="1"/>
</dbReference>
<dbReference type="FunFam" id="3.40.1280.10:FF:000001">
    <property type="entry name" value="tRNA (guanine-N(1)-)-methyltransferase"/>
    <property type="match status" value="1"/>
</dbReference>
<dbReference type="Gene3D" id="3.40.1280.10">
    <property type="match status" value="1"/>
</dbReference>
<dbReference type="Gene3D" id="1.10.1270.20">
    <property type="entry name" value="tRNA(m1g37)methyltransferase, domain 2"/>
    <property type="match status" value="1"/>
</dbReference>
<dbReference type="HAMAP" id="MF_00605">
    <property type="entry name" value="TrmD"/>
    <property type="match status" value="1"/>
</dbReference>
<dbReference type="InterPro" id="IPR029028">
    <property type="entry name" value="Alpha/beta_knot_MTases"/>
</dbReference>
<dbReference type="InterPro" id="IPR023148">
    <property type="entry name" value="tRNA_m1G_MeTrfase_C_sf"/>
</dbReference>
<dbReference type="InterPro" id="IPR002649">
    <property type="entry name" value="tRNA_m1G_MeTrfase_TrmD"/>
</dbReference>
<dbReference type="InterPro" id="IPR029026">
    <property type="entry name" value="tRNA_m1G_MTases_N"/>
</dbReference>
<dbReference type="InterPro" id="IPR016009">
    <property type="entry name" value="tRNA_MeTrfase_TRMD/TRM10"/>
</dbReference>
<dbReference type="NCBIfam" id="NF000648">
    <property type="entry name" value="PRK00026.1"/>
    <property type="match status" value="1"/>
</dbReference>
<dbReference type="NCBIfam" id="TIGR00088">
    <property type="entry name" value="trmD"/>
    <property type="match status" value="1"/>
</dbReference>
<dbReference type="PANTHER" id="PTHR46417">
    <property type="entry name" value="TRNA (GUANINE-N(1)-)-METHYLTRANSFERASE"/>
    <property type="match status" value="1"/>
</dbReference>
<dbReference type="PANTHER" id="PTHR46417:SF1">
    <property type="entry name" value="TRNA (GUANINE-N(1)-)-METHYLTRANSFERASE"/>
    <property type="match status" value="1"/>
</dbReference>
<dbReference type="Pfam" id="PF01746">
    <property type="entry name" value="tRNA_m1G_MT"/>
    <property type="match status" value="1"/>
</dbReference>
<dbReference type="PIRSF" id="PIRSF000386">
    <property type="entry name" value="tRNA_mtase"/>
    <property type="match status" value="1"/>
</dbReference>
<dbReference type="SUPFAM" id="SSF75217">
    <property type="entry name" value="alpha/beta knot"/>
    <property type="match status" value="1"/>
</dbReference>
<proteinExistence type="inferred from homology"/>
<sequence>MKIDILTLFPDMFTGVFGSSILKKAQEKEAVELRVVNFRDYTTSKHNSVDDYPYGGGAGMVLTPQPIFDAVEDLTKETERKPRVVLMCPQGERFTQKKAEELAEEEHLIFVCGHYEGYDERIREHLVTDEISIGDYVLTGGELASMVITDSVVRLLPGVLGNHASQVEDSFSTGLLEHPHYTRPADFRGMKVPDVLMSGNHKNIDEWRHKESLRRTYTRRPDLLEERELSKQEKKWLEQIKEGK</sequence>
<gene>
    <name evidence="1" type="primary">trmD</name>
    <name type="ordered locus">BCQ_3626</name>
</gene>
<organism>
    <name type="scientific">Bacillus cereus (strain Q1)</name>
    <dbReference type="NCBI Taxonomy" id="361100"/>
    <lineage>
        <taxon>Bacteria</taxon>
        <taxon>Bacillati</taxon>
        <taxon>Bacillota</taxon>
        <taxon>Bacilli</taxon>
        <taxon>Bacillales</taxon>
        <taxon>Bacillaceae</taxon>
        <taxon>Bacillus</taxon>
        <taxon>Bacillus cereus group</taxon>
    </lineage>
</organism>
<feature type="chain" id="PRO_1000147072" description="tRNA (guanine-N(1)-)-methyltransferase">
    <location>
        <begin position="1"/>
        <end position="244"/>
    </location>
</feature>
<feature type="binding site" evidence="1">
    <location>
        <position position="113"/>
    </location>
    <ligand>
        <name>S-adenosyl-L-methionine</name>
        <dbReference type="ChEBI" id="CHEBI:59789"/>
    </ligand>
</feature>
<feature type="binding site" evidence="1">
    <location>
        <begin position="133"/>
        <end position="138"/>
    </location>
    <ligand>
        <name>S-adenosyl-L-methionine</name>
        <dbReference type="ChEBI" id="CHEBI:59789"/>
    </ligand>
</feature>
<name>TRMD_BACCQ</name>
<evidence type="ECO:0000255" key="1">
    <source>
        <dbReference type="HAMAP-Rule" id="MF_00605"/>
    </source>
</evidence>
<keyword id="KW-0963">Cytoplasm</keyword>
<keyword id="KW-0489">Methyltransferase</keyword>
<keyword id="KW-0949">S-adenosyl-L-methionine</keyword>
<keyword id="KW-0808">Transferase</keyword>
<keyword id="KW-0819">tRNA processing</keyword>
<protein>
    <recommendedName>
        <fullName evidence="1">tRNA (guanine-N(1)-)-methyltransferase</fullName>
        <ecNumber evidence="1">2.1.1.228</ecNumber>
    </recommendedName>
    <alternativeName>
        <fullName evidence="1">M1G-methyltransferase</fullName>
    </alternativeName>
    <alternativeName>
        <fullName evidence="1">tRNA [GM37] methyltransferase</fullName>
    </alternativeName>
</protein>
<comment type="function">
    <text evidence="1">Specifically methylates guanosine-37 in various tRNAs.</text>
</comment>
<comment type="catalytic activity">
    <reaction evidence="1">
        <text>guanosine(37) in tRNA + S-adenosyl-L-methionine = N(1)-methylguanosine(37) in tRNA + S-adenosyl-L-homocysteine + H(+)</text>
        <dbReference type="Rhea" id="RHEA:36899"/>
        <dbReference type="Rhea" id="RHEA-COMP:10145"/>
        <dbReference type="Rhea" id="RHEA-COMP:10147"/>
        <dbReference type="ChEBI" id="CHEBI:15378"/>
        <dbReference type="ChEBI" id="CHEBI:57856"/>
        <dbReference type="ChEBI" id="CHEBI:59789"/>
        <dbReference type="ChEBI" id="CHEBI:73542"/>
        <dbReference type="ChEBI" id="CHEBI:74269"/>
        <dbReference type="EC" id="2.1.1.228"/>
    </reaction>
</comment>
<comment type="subunit">
    <text evidence="1">Homodimer.</text>
</comment>
<comment type="subcellular location">
    <subcellularLocation>
        <location evidence="1">Cytoplasm</location>
    </subcellularLocation>
</comment>
<comment type="similarity">
    <text evidence="1">Belongs to the RNA methyltransferase TrmD family.</text>
</comment>
<accession>B9IVD0</accession>
<reference key="1">
    <citation type="journal article" date="2009" name="J. Bacteriol.">
        <title>Complete genome sequence of the extremophilic Bacillus cereus strain Q1 with industrial applications.</title>
        <authorList>
            <person name="Xiong Z."/>
            <person name="Jiang Y."/>
            <person name="Qi D."/>
            <person name="Lu H."/>
            <person name="Yang F."/>
            <person name="Yang J."/>
            <person name="Chen L."/>
            <person name="Sun L."/>
            <person name="Xu X."/>
            <person name="Xue Y."/>
            <person name="Zhu Y."/>
            <person name="Jin Q."/>
        </authorList>
    </citation>
    <scope>NUCLEOTIDE SEQUENCE [LARGE SCALE GENOMIC DNA]</scope>
    <source>
        <strain>Q1</strain>
    </source>
</reference>